<feature type="signal peptide" evidence="1">
    <location>
        <begin position="1"/>
        <end position="21"/>
    </location>
</feature>
<feature type="chain" id="PRO_0000250682" description="Leukocyte-associated immunoglobulin-like receptor 1">
    <location>
        <begin position="22"/>
        <end position="287"/>
    </location>
</feature>
<feature type="topological domain" description="Extracellular" evidence="1">
    <location>
        <begin position="22"/>
        <end position="165"/>
    </location>
</feature>
<feature type="transmembrane region" description="Helical" evidence="1">
    <location>
        <begin position="166"/>
        <end position="186"/>
    </location>
</feature>
<feature type="topological domain" description="Cytoplasmic" evidence="1">
    <location>
        <begin position="187"/>
        <end position="287"/>
    </location>
</feature>
<feature type="domain" description="Ig-like C2-type">
    <location>
        <begin position="29"/>
        <end position="117"/>
    </location>
</feature>
<feature type="region of interest" description="Disordered" evidence="2">
    <location>
        <begin position="121"/>
        <end position="155"/>
    </location>
</feature>
<feature type="region of interest" description="Disordered" evidence="2">
    <location>
        <begin position="192"/>
        <end position="211"/>
    </location>
</feature>
<feature type="short sequence motif" description="ITIM motif 1">
    <location>
        <begin position="249"/>
        <end position="254"/>
    </location>
</feature>
<feature type="short sequence motif" description="ITIM motif 2">
    <location>
        <begin position="279"/>
        <end position="284"/>
    </location>
</feature>
<feature type="compositionally biased region" description="Polar residues" evidence="2">
    <location>
        <begin position="134"/>
        <end position="145"/>
    </location>
</feature>
<feature type="compositionally biased region" description="Basic and acidic residues" evidence="2">
    <location>
        <begin position="198"/>
        <end position="208"/>
    </location>
</feature>
<feature type="modified residue" description="Phosphotyrosine" evidence="5">
    <location>
        <position position="251"/>
    </location>
</feature>
<feature type="modified residue" description="Phosphotyrosine" evidence="5">
    <location>
        <position position="281"/>
    </location>
</feature>
<feature type="glycosylation site" description="N-linked (GlcNAc...) asparagine" evidence="16">
    <location>
        <position position="69"/>
    </location>
</feature>
<feature type="disulfide bond" evidence="17">
    <location>
        <begin position="49"/>
        <end position="101"/>
    </location>
</feature>
<feature type="splice variant" id="VSP_020710" description="In isoform 3." evidence="21">
    <location>
        <position position="23"/>
    </location>
</feature>
<feature type="splice variant" id="VSP_020711" description="In isoform 2 and isoform 3." evidence="20 21">
    <location>
        <begin position="122"/>
        <end position="138"/>
    </location>
</feature>
<feature type="splice variant" id="VSP_020712" description="In isoform 4." evidence="21">
    <location>
        <begin position="210"/>
        <end position="287"/>
    </location>
</feature>
<feature type="sequence variant" id="VAR_027598" description="In dbSNP:rs3745442." evidence="3 5 12 18">
    <original>D</original>
    <variation>E</variation>
    <location>
        <position position="63"/>
    </location>
</feature>
<feature type="sequence variant" id="VAR_085777" description="In dbSNP:rs118056835." evidence="3 5 12 18">
    <original>R</original>
    <variation>S</variation>
    <location>
        <position position="92"/>
    </location>
</feature>
<feature type="sequence variant" id="VAR_085778" description="In dbSNP:rs79046875." evidence="3 5 12 18">
    <original>L</original>
    <variation>P</variation>
    <location>
        <position position="98"/>
    </location>
</feature>
<feature type="sequence variant" id="VAR_085779" description="In dbSNP:rs190462445." evidence="5 12 18">
    <original>S</original>
    <variation>T</variation>
    <location>
        <position position="123"/>
    </location>
</feature>
<feature type="mutagenesis site" description="Reduced tyrosine phosphorylation and loss of binding to PTPN6 and CSK as well as complete loss of inhibitory activity. Loss of phosphorylation and of inhibition of calcium mobilization; when associated with F-281." evidence="5 10 15">
    <original>Y</original>
    <variation>F</variation>
    <location>
        <position position="251"/>
    </location>
</feature>
<feature type="mutagenesis site" description="Reduced tyrosine phosphorylation and loss of binding to PTPN6. Partial inhibition of cytotoxic activity." evidence="5 10 15">
    <original>Y</original>
    <variation>F</variation>
    <location>
        <position position="281"/>
    </location>
</feature>
<feature type="strand" evidence="23">
    <location>
        <begin position="30"/>
        <end position="35"/>
    </location>
</feature>
<feature type="strand" evidence="23">
    <location>
        <begin position="37"/>
        <end position="40"/>
    </location>
</feature>
<feature type="strand" evidence="23">
    <location>
        <begin position="45"/>
        <end position="51"/>
    </location>
</feature>
<feature type="strand" evidence="23">
    <location>
        <begin position="57"/>
        <end position="62"/>
    </location>
</feature>
<feature type="helix" evidence="23">
    <location>
        <begin position="63"/>
        <end position="65"/>
    </location>
</feature>
<feature type="strand" evidence="23">
    <location>
        <begin position="67"/>
        <end position="71"/>
    </location>
</feature>
<feature type="strand" evidence="23">
    <location>
        <begin position="75"/>
        <end position="78"/>
    </location>
</feature>
<feature type="strand" evidence="23">
    <location>
        <begin position="81"/>
        <end position="90"/>
    </location>
</feature>
<feature type="helix" evidence="23">
    <location>
        <begin position="93"/>
        <end position="95"/>
    </location>
</feature>
<feature type="strand" evidence="23">
    <location>
        <begin position="97"/>
        <end position="105"/>
    </location>
</feature>
<feature type="strand" evidence="23">
    <location>
        <begin position="116"/>
        <end position="121"/>
    </location>
</feature>
<evidence type="ECO:0000255" key="1"/>
<evidence type="ECO:0000256" key="2">
    <source>
        <dbReference type="SAM" id="MobiDB-lite"/>
    </source>
</evidence>
<evidence type="ECO:0000269" key="3">
    <source>
    </source>
</evidence>
<evidence type="ECO:0000269" key="4">
    <source>
    </source>
</evidence>
<evidence type="ECO:0000269" key="5">
    <source>
    </source>
</evidence>
<evidence type="ECO:0000269" key="6">
    <source>
    </source>
</evidence>
<evidence type="ECO:0000269" key="7">
    <source>
    </source>
</evidence>
<evidence type="ECO:0000269" key="8">
    <source>
    </source>
</evidence>
<evidence type="ECO:0000269" key="9">
    <source>
    </source>
</evidence>
<evidence type="ECO:0000269" key="10">
    <source>
    </source>
</evidence>
<evidence type="ECO:0000269" key="11">
    <source>
    </source>
</evidence>
<evidence type="ECO:0000269" key="12">
    <source>
    </source>
</evidence>
<evidence type="ECO:0000269" key="13">
    <source>
    </source>
</evidence>
<evidence type="ECO:0000269" key="14">
    <source>
    </source>
</evidence>
<evidence type="ECO:0000269" key="15">
    <source>
    </source>
</evidence>
<evidence type="ECO:0000269" key="16">
    <source>
    </source>
</evidence>
<evidence type="ECO:0000269" key="17">
    <source>
    </source>
</evidence>
<evidence type="ECO:0000269" key="18">
    <source>
    </source>
</evidence>
<evidence type="ECO:0000269" key="19">
    <source>
    </source>
</evidence>
<evidence type="ECO:0000303" key="20">
    <source>
    </source>
</evidence>
<evidence type="ECO:0000303" key="21">
    <source>
    </source>
</evidence>
<evidence type="ECO:0000305" key="22"/>
<evidence type="ECO:0007829" key="23">
    <source>
        <dbReference type="PDB" id="3KGR"/>
    </source>
</evidence>
<proteinExistence type="evidence at protein level"/>
<comment type="function">
    <text evidence="3 5 6 7 8 13 14 15 18 19">Functions as an inhibitory receptor that plays a constitutive negative regulatory role on cytolytic function of natural killer (NK) cells, B-cells and T-cells. Activation by Tyr phosphorylation results in recruitment and activation of the phosphatases PTPN6 and PTPN11. It also reduces the increase of intracellular calcium evoked by B-cell receptor ligation. May also play its inhibitory role independently of SH2-containing phosphatases. Modulates cytokine production in CD4+ T-cells, down-regulating IL2 and IFNG production while inducing secretion of transforming growth factor beta. Also down-regulates IgG and IgE production in B-cells as well as IL8, IL10 and TNF secretion. Inhibits proliferation and induces apoptosis in myeloid leukemia cell lines as well as prevents nuclear translocation of NF-kappa-B p65 subunit/RELA and phosphorylation of I-kappa-B alpha/CHUK in these cells. Inhibits the differentiation of peripheral blood precursors towards dendritic cells.</text>
</comment>
<comment type="subunit">
    <text evidence="5 7 15 17 18">Interacts with SH2 domains of tyrosine-protein phosphatases PTPN6 and PTPN11. The interaction with PTPN6 is constitutive. Interacts with the SH2 domain of CSK. Binds with high affinity to extracellular matrix collagens, the interaction is functionally important.</text>
</comment>
<comment type="interaction">
    <interactant intactId="EBI-965864">
        <id>Q6GTX8</id>
    </interactant>
    <interactant intactId="EBI-78260">
        <id>P29350</id>
        <label>PTPN6</label>
    </interactant>
    <organismsDiffer>false</organismsDiffer>
    <experiments>5</experiments>
</comment>
<comment type="subcellular location">
    <subcellularLocation>
        <location evidence="3 7 18">Cell membrane</location>
        <topology evidence="3 7 18">Single-pass type I membrane protein</topology>
    </subcellularLocation>
</comment>
<comment type="alternative products">
    <event type="alternative splicing"/>
    <isoform>
        <id>Q6GTX8-1</id>
        <name>1</name>
        <name>LAIR-1a</name>
        <sequence type="displayed"/>
    </isoform>
    <isoform>
        <id>Q6GTX8-2</id>
        <name>2</name>
        <name>LAIR-1b</name>
        <sequence type="described" ref="VSP_020711"/>
    </isoform>
    <isoform>
        <id>Q6GTX8-3</id>
        <name>3</name>
        <name>LAIR-1c</name>
        <sequence type="described" ref="VSP_020710 VSP_020711"/>
    </isoform>
    <isoform>
        <id>Q6GTX8-4</id>
        <name>4</name>
        <name>LAIR-1d</name>
        <sequence type="described" ref="VSP_020712"/>
    </isoform>
</comment>
<comment type="tissue specificity">
    <text evidence="4 9 11 14">Expressed on the majority of peripheral mononuclear cells, including natural killer (NK) cells, T-cells, B-cells, monocytes, and dendritic cells. Highly expressed in naive T-cells and B-cells but no expression on germinal center B-cells. Abnormally low expression in naive B-cells from HIV-1 infected patients. Very low expression in NK cells from a patient with chronic active Epstein-Barr virus infection.</text>
</comment>
<comment type="developmental stage">
    <text evidence="4">Complete loss of expression when naive B-cells proliferates and differentiates into Ig-producing plasma cells under in vitro stimulation.</text>
</comment>
<comment type="induction">
    <text evidence="14">By T-cell receptor stimulation in a process that requires p38 MAP kinase and ERK signaling.</text>
</comment>
<comment type="domain">
    <text evidence="18">ITIM (immunoreceptor tyrosine-based inhibitor motif) motif is a cytoplasmic motif present in 2 copies in the intracellular part of LAIR1. When phosphorylated, ITIM motif can bind the SH2 domain of several SH2-containing phosphatases, leading to down-regulation of cell activation.</text>
</comment>
<comment type="PTM">
    <text evidence="5">Phosphorylation at Tyr-251 and Tyr-281 activates it. May be phosphorylated by LCK.</text>
</comment>
<comment type="PTM">
    <text evidence="16 18">N-glycosylated.</text>
</comment>
<comment type="miscellaneous">
    <molecule>Isoform 2</molecule>
    <text evidence="22">Functions as an inhibitory receptor in NK cells and T-cells.</text>
</comment>
<organism>
    <name type="scientific">Homo sapiens</name>
    <name type="common">Human</name>
    <dbReference type="NCBI Taxonomy" id="9606"/>
    <lineage>
        <taxon>Eukaryota</taxon>
        <taxon>Metazoa</taxon>
        <taxon>Chordata</taxon>
        <taxon>Craniata</taxon>
        <taxon>Vertebrata</taxon>
        <taxon>Euteleostomi</taxon>
        <taxon>Mammalia</taxon>
        <taxon>Eutheria</taxon>
        <taxon>Euarchontoglires</taxon>
        <taxon>Primates</taxon>
        <taxon>Haplorrhini</taxon>
        <taxon>Catarrhini</taxon>
        <taxon>Hominidae</taxon>
        <taxon>Homo</taxon>
    </lineage>
</organism>
<name>LAIR1_HUMAN</name>
<protein>
    <recommendedName>
        <fullName>Leukocyte-associated immunoglobulin-like receptor 1</fullName>
        <shortName>LAIR-1</shortName>
        <shortName>hLAIR1</shortName>
    </recommendedName>
    <cdAntigenName>CD305</cdAntigenName>
</protein>
<accession>Q6GTX8</accession>
<dbReference type="EMBL" id="AF013249">
    <property type="protein sequence ID" value="AAB69324.1"/>
    <property type="molecule type" value="mRNA"/>
</dbReference>
<dbReference type="EMBL" id="AF109683">
    <property type="protein sequence ID" value="AAF17107.1"/>
    <property type="molecule type" value="mRNA"/>
</dbReference>
<dbReference type="EMBL" id="AF251509">
    <property type="protein sequence ID" value="AAF71274.2"/>
    <property type="molecule type" value="mRNA"/>
</dbReference>
<dbReference type="EMBL" id="AF251510">
    <property type="protein sequence ID" value="AAF71275.2"/>
    <property type="molecule type" value="mRNA"/>
</dbReference>
<dbReference type="EMBL" id="CR542051">
    <property type="protein sequence ID" value="CAG46848.1"/>
    <property type="molecule type" value="mRNA"/>
</dbReference>
<dbReference type="EMBL" id="BC027899">
    <property type="protein sequence ID" value="AAH27899.1"/>
    <property type="molecule type" value="mRNA"/>
</dbReference>
<dbReference type="CCDS" id="CCDS12891.1">
    <molecule id="Q6GTX8-1"/>
</dbReference>
<dbReference type="CCDS" id="CCDS12892.1">
    <molecule id="Q6GTX8-2"/>
</dbReference>
<dbReference type="CCDS" id="CCDS74448.1">
    <molecule id="Q6GTX8-3"/>
</dbReference>
<dbReference type="RefSeq" id="NP_001275952.2">
    <molecule id="Q6GTX8-3"/>
    <property type="nucleotide sequence ID" value="NM_001289023.3"/>
</dbReference>
<dbReference type="RefSeq" id="NP_001275954.2">
    <property type="nucleotide sequence ID" value="NM_001289025.2"/>
</dbReference>
<dbReference type="RefSeq" id="NP_002278.2">
    <molecule id="Q6GTX8-1"/>
    <property type="nucleotide sequence ID" value="NM_002287.6"/>
</dbReference>
<dbReference type="RefSeq" id="NP_068352.2">
    <molecule id="Q6GTX8-2"/>
    <property type="nucleotide sequence ID" value="NM_021706.5"/>
</dbReference>
<dbReference type="PDB" id="3KGR">
    <property type="method" value="X-ray"/>
    <property type="resolution" value="1.80 A"/>
    <property type="chains" value="A/B/C=22-122"/>
</dbReference>
<dbReference type="PDB" id="3RP1">
    <property type="method" value="X-ray"/>
    <property type="resolution" value="2.60 A"/>
    <property type="chains" value="A/B/C/D=22-123"/>
</dbReference>
<dbReference type="PDB" id="7F9L">
    <property type="method" value="X-ray"/>
    <property type="resolution" value="2.70 A"/>
    <property type="chains" value="G/H/I/J/K/L=22-122"/>
</dbReference>
<dbReference type="PDB" id="7F9M">
    <property type="method" value="X-ray"/>
    <property type="resolution" value="2.90 A"/>
    <property type="chains" value="C/D=22-122"/>
</dbReference>
<dbReference type="PDB" id="7F9N">
    <property type="method" value="X-ray"/>
    <property type="resolution" value="3.00 A"/>
    <property type="chains" value="C/D=22-122"/>
</dbReference>
<dbReference type="PDBsum" id="3KGR"/>
<dbReference type="PDBsum" id="3RP1"/>
<dbReference type="PDBsum" id="7F9L"/>
<dbReference type="PDBsum" id="7F9M"/>
<dbReference type="PDBsum" id="7F9N"/>
<dbReference type="SMR" id="Q6GTX8"/>
<dbReference type="BioGRID" id="110098">
    <property type="interactions" value="8"/>
</dbReference>
<dbReference type="FunCoup" id="Q6GTX8">
    <property type="interactions" value="53"/>
</dbReference>
<dbReference type="IntAct" id="Q6GTX8">
    <property type="interactions" value="6"/>
</dbReference>
<dbReference type="MINT" id="Q6GTX8"/>
<dbReference type="STRING" id="9606.ENSP00000375622"/>
<dbReference type="GlyConnect" id="1998">
    <property type="glycosylation" value="10 N-Linked glycans (1 site)"/>
</dbReference>
<dbReference type="GlyCosmos" id="Q6GTX8">
    <property type="glycosylation" value="2 sites, 11 glycans"/>
</dbReference>
<dbReference type="GlyGen" id="Q6GTX8">
    <property type="glycosylation" value="2 sites, 20 N-linked glycans (1 site), 1 O-linked glycan (1 site)"/>
</dbReference>
<dbReference type="iPTMnet" id="Q6GTX8"/>
<dbReference type="PhosphoSitePlus" id="Q6GTX8"/>
<dbReference type="SwissPalm" id="Q6GTX8"/>
<dbReference type="BioMuta" id="LAIR1"/>
<dbReference type="DMDM" id="74736490"/>
<dbReference type="jPOST" id="Q6GTX8"/>
<dbReference type="MassIVE" id="Q6GTX8"/>
<dbReference type="PaxDb" id="9606-ENSP00000375622"/>
<dbReference type="PeptideAtlas" id="Q6GTX8"/>
<dbReference type="ProteomicsDB" id="66322">
    <molecule id="Q6GTX8-1"/>
</dbReference>
<dbReference type="ProteomicsDB" id="66323">
    <molecule id="Q6GTX8-2"/>
</dbReference>
<dbReference type="ProteomicsDB" id="66324">
    <molecule id="Q6GTX8-3"/>
</dbReference>
<dbReference type="ProteomicsDB" id="66325">
    <molecule id="Q6GTX8-4"/>
</dbReference>
<dbReference type="ABCD" id="Q6GTX8">
    <property type="antibodies" value="22 sequenced antibodies"/>
</dbReference>
<dbReference type="Antibodypedia" id="2596">
    <property type="antibodies" value="832 antibodies from 36 providers"/>
</dbReference>
<dbReference type="DNASU" id="3903"/>
<dbReference type="Ensembl" id="ENST00000348231.8">
    <molecule id="Q6GTX8-2"/>
    <property type="protein sequence ID" value="ENSP00000301193.4"/>
    <property type="gene ID" value="ENSG00000167613.16"/>
</dbReference>
<dbReference type="Ensembl" id="ENST00000391742.7">
    <molecule id="Q6GTX8-1"/>
    <property type="protein sequence ID" value="ENSP00000375622.2"/>
    <property type="gene ID" value="ENSG00000167613.16"/>
</dbReference>
<dbReference type="Ensembl" id="ENST00000474878.5">
    <molecule id="Q6GTX8-3"/>
    <property type="protein sequence ID" value="ENSP00000418998.1"/>
    <property type="gene ID" value="ENSG00000167613.16"/>
</dbReference>
<dbReference type="Ensembl" id="ENST00000610549.4">
    <property type="protein sequence ID" value="ENSP00000481204.1"/>
    <property type="gene ID" value="ENSG00000276053.4"/>
</dbReference>
<dbReference type="Ensembl" id="ENST00000614937.4">
    <property type="protein sequence ID" value="ENSP00000479006.1"/>
    <property type="gene ID" value="ENSG00000278154.4"/>
</dbReference>
<dbReference type="Ensembl" id="ENST00000614946.1">
    <property type="protein sequence ID" value="ENSP00000478853.1"/>
    <property type="gene ID" value="ENSG00000274110.4"/>
</dbReference>
<dbReference type="Ensembl" id="ENST00000616612.4">
    <property type="protein sequence ID" value="ENSP00000479682.1"/>
    <property type="gene ID" value="ENSG00000278154.4"/>
</dbReference>
<dbReference type="Ensembl" id="ENST00000618434.4">
    <property type="protein sequence ID" value="ENSP00000479133.1"/>
    <property type="gene ID" value="ENSG00000274110.4"/>
</dbReference>
<dbReference type="Ensembl" id="ENST00000619717.4">
    <property type="protein sequence ID" value="ENSP00000479707.1"/>
    <property type="gene ID" value="ENSG00000276053.4"/>
</dbReference>
<dbReference type="Ensembl" id="ENST00000619817.4">
    <property type="protein sequence ID" value="ENSP00000480619.1"/>
    <property type="gene ID" value="ENSG00000276163.4"/>
</dbReference>
<dbReference type="Ensembl" id="ENST00000620077.4">
    <property type="protein sequence ID" value="ENSP00000482922.1"/>
    <property type="gene ID" value="ENSG00000276053.4"/>
</dbReference>
<dbReference type="Ensembl" id="ENST00000620357.4">
    <property type="protein sequence ID" value="ENSP00000479649.1"/>
    <property type="gene ID" value="ENSG00000278154.4"/>
</dbReference>
<dbReference type="Ensembl" id="ENST00000620726.1">
    <property type="protein sequence ID" value="ENSP00000478405.1"/>
    <property type="gene ID" value="ENSG00000276163.4"/>
</dbReference>
<dbReference type="Ensembl" id="ENST00000622097.4">
    <property type="protein sequence ID" value="ENSP00000480659.1"/>
    <property type="gene ID" value="ENSG00000274110.4"/>
</dbReference>
<dbReference type="GeneID" id="3903"/>
<dbReference type="KEGG" id="hsa:3903"/>
<dbReference type="MANE-Select" id="ENST00000391742.7">
    <property type="protein sequence ID" value="ENSP00000375622.2"/>
    <property type="RefSeq nucleotide sequence ID" value="NM_002287.6"/>
    <property type="RefSeq protein sequence ID" value="NP_002278.2"/>
</dbReference>
<dbReference type="UCSC" id="uc032idt.2">
    <molecule id="Q6GTX8-1"/>
    <property type="organism name" value="human"/>
</dbReference>
<dbReference type="AGR" id="HGNC:6477"/>
<dbReference type="CTD" id="3903"/>
<dbReference type="DisGeNET" id="3903"/>
<dbReference type="GeneCards" id="LAIR1"/>
<dbReference type="HGNC" id="HGNC:6477">
    <property type="gene designation" value="LAIR1"/>
</dbReference>
<dbReference type="HPA" id="ENSG00000167613">
    <property type="expression patterns" value="Tissue enhanced (lung, lymphoid tissue)"/>
</dbReference>
<dbReference type="MIM" id="602992">
    <property type="type" value="gene"/>
</dbReference>
<dbReference type="neXtProt" id="NX_Q6GTX8"/>
<dbReference type="OpenTargets" id="ENSG00000167613"/>
<dbReference type="PharmGKB" id="PA30266"/>
<dbReference type="VEuPathDB" id="HostDB:ENSG00000167613"/>
<dbReference type="eggNOG" id="ENOG502TBGD">
    <property type="taxonomic scope" value="Eukaryota"/>
</dbReference>
<dbReference type="GeneTree" id="ENSGT00940000162693"/>
<dbReference type="HOGENOM" id="CLU_021100_3_1_1"/>
<dbReference type="InParanoid" id="Q6GTX8"/>
<dbReference type="OMA" id="CIYQIES"/>
<dbReference type="OrthoDB" id="9838250at2759"/>
<dbReference type="PAN-GO" id="Q6GTX8">
    <property type="GO annotations" value="1 GO annotation based on evolutionary models"/>
</dbReference>
<dbReference type="PhylomeDB" id="Q6GTX8"/>
<dbReference type="TreeFam" id="TF336644"/>
<dbReference type="PathwayCommons" id="Q6GTX8"/>
<dbReference type="Reactome" id="R-HSA-198933">
    <property type="pathway name" value="Immunoregulatory interactions between a Lymphoid and a non-Lymphoid cell"/>
</dbReference>
<dbReference type="Reactome" id="R-HSA-6798695">
    <property type="pathway name" value="Neutrophil degranulation"/>
</dbReference>
<dbReference type="SignaLink" id="Q6GTX8"/>
<dbReference type="BioGRID-ORCS" id="3903">
    <property type="hits" value="25 hits in 1145 CRISPR screens"/>
</dbReference>
<dbReference type="ChiTaRS" id="LAIR1">
    <property type="organism name" value="human"/>
</dbReference>
<dbReference type="EvolutionaryTrace" id="Q6GTX8"/>
<dbReference type="GeneWiki" id="LAIR1"/>
<dbReference type="GenomeRNAi" id="3903"/>
<dbReference type="Pharos" id="Q6GTX8">
    <property type="development level" value="Tbio"/>
</dbReference>
<dbReference type="PRO" id="PR:Q6GTX8"/>
<dbReference type="Proteomes" id="UP000005640">
    <property type="component" value="Chromosome 19"/>
</dbReference>
<dbReference type="RNAct" id="Q6GTX8">
    <property type="molecule type" value="protein"/>
</dbReference>
<dbReference type="Bgee" id="ENSG00000167613">
    <property type="expression patterns" value="Expressed in granulocyte and 99 other cell types or tissues"/>
</dbReference>
<dbReference type="ExpressionAtlas" id="Q6GTX8">
    <property type="expression patterns" value="baseline and differential"/>
</dbReference>
<dbReference type="GO" id="GO:0005886">
    <property type="term" value="C:plasma membrane"/>
    <property type="evidence" value="ECO:0000314"/>
    <property type="project" value="HPA"/>
</dbReference>
<dbReference type="GO" id="GO:0035579">
    <property type="term" value="C:specific granule membrane"/>
    <property type="evidence" value="ECO:0000304"/>
    <property type="project" value="Reactome"/>
</dbReference>
<dbReference type="GO" id="GO:0070821">
    <property type="term" value="C:tertiary granule membrane"/>
    <property type="evidence" value="ECO:0000304"/>
    <property type="project" value="Reactome"/>
</dbReference>
<dbReference type="GO" id="GO:0002250">
    <property type="term" value="P:adaptive immune response"/>
    <property type="evidence" value="ECO:0007669"/>
    <property type="project" value="UniProtKB-KW"/>
</dbReference>
<dbReference type="GO" id="GO:0002764">
    <property type="term" value="P:immune response-regulating signaling pathway"/>
    <property type="evidence" value="ECO:0000318"/>
    <property type="project" value="GO_Central"/>
</dbReference>
<dbReference type="FunFam" id="2.60.40.10:FF:001824">
    <property type="entry name" value="Leukocyte-associated immunoglobulin-like receptor 1"/>
    <property type="match status" value="1"/>
</dbReference>
<dbReference type="Gene3D" id="2.60.40.10">
    <property type="entry name" value="Immunoglobulins"/>
    <property type="match status" value="1"/>
</dbReference>
<dbReference type="InterPro" id="IPR036179">
    <property type="entry name" value="Ig-like_dom_sf"/>
</dbReference>
<dbReference type="InterPro" id="IPR013783">
    <property type="entry name" value="Ig-like_fold"/>
</dbReference>
<dbReference type="InterPro" id="IPR050412">
    <property type="entry name" value="Ig-like_Receptors_ImmuneReg"/>
</dbReference>
<dbReference type="InterPro" id="IPR003599">
    <property type="entry name" value="Ig_sub"/>
</dbReference>
<dbReference type="PANTHER" id="PTHR11738:SF129">
    <property type="entry name" value="LEUKOCYTE-ASSOCIATED IMMUNOGLOBULIN-LIKE RECEPTOR 1"/>
    <property type="match status" value="1"/>
</dbReference>
<dbReference type="PANTHER" id="PTHR11738">
    <property type="entry name" value="MHC CLASS I NK CELL RECEPTOR"/>
    <property type="match status" value="1"/>
</dbReference>
<dbReference type="Pfam" id="PF13895">
    <property type="entry name" value="Ig_2"/>
    <property type="match status" value="1"/>
</dbReference>
<dbReference type="SMART" id="SM00409">
    <property type="entry name" value="IG"/>
    <property type="match status" value="1"/>
</dbReference>
<dbReference type="SUPFAM" id="SSF48726">
    <property type="entry name" value="Immunoglobulin"/>
    <property type="match status" value="1"/>
</dbReference>
<reference key="1">
    <citation type="journal article" date="1997" name="Immunity">
        <title>LAIR-1, a novel inhibitory receptor expressed on human mononuclear leukocytes.</title>
        <authorList>
            <person name="Meyaard L."/>
            <person name="Adema G.J."/>
            <person name="Chang C."/>
            <person name="Woollatt E."/>
            <person name="Sutherland G.R."/>
            <person name="Lanier L.L."/>
            <person name="Phillips J.H."/>
        </authorList>
    </citation>
    <scope>NUCLEOTIDE SEQUENCE [MRNA] (ISOFORM 1)</scope>
    <scope>FUNCTION</scope>
    <scope>GLYCOSYLATION</scope>
    <scope>SUBCELLULAR LOCATION</scope>
    <scope>DOMAIN ITIM MOTIF</scope>
    <scope>INTERACTION WITH PTPN6 AND PTPN11</scope>
    <scope>VARIANTS GLU-63; SER-92; PRO-98 AND THR-123</scope>
</reference>
<reference key="2">
    <citation type="journal article" date="1999" name="J. Immunol.">
        <title>Leukocyte-associated Ig-like receptor-1 functions as an inhibitory receptor on cytotoxic T cells.</title>
        <authorList>
            <person name="Meyaard L."/>
            <person name="Hurenkamp J."/>
            <person name="Clevers H."/>
            <person name="Lanier L.L."/>
            <person name="Phillips J.H."/>
        </authorList>
    </citation>
    <scope>NUCLEOTIDE SEQUENCE [MRNA] (ISOFORM 2)</scope>
    <scope>FUNCTION</scope>
    <scope>SUBCELLULAR LOCATION</scope>
    <scope>VARIANTS GLU-63; SER-92 AND PRO-98</scope>
</reference>
<reference key="3">
    <citation type="journal article" date="2000" name="J. Biol. Chem.">
        <title>Identification and characterization of leukocyte-associated Ig-like receptor-1 as a major anchor protein of tyrosine phosphatase SHP-1 in hematopoietic cells.</title>
        <authorList>
            <person name="Xu M.-J."/>
            <person name="Zhao R."/>
            <person name="Zhao Z.J."/>
        </authorList>
    </citation>
    <scope>NUCLEOTIDE SEQUENCE [MRNA] (ISOFORMS 3 AND 4)</scope>
    <scope>FUNCTION</scope>
    <scope>PHOSPHORYLATION AT TYR-251 AND TYR-281</scope>
    <scope>MUTAGENESIS OF TYR-251 AND TYR-281</scope>
    <scope>INTERACTION WITH PTPN6</scope>
    <scope>VARIANTS GLU-63; SER-92; PRO-98 AND THR-123</scope>
</reference>
<reference key="4">
    <citation type="submission" date="2004-06" db="EMBL/GenBank/DDBJ databases">
        <title>Cloning of human full open reading frames in Gateway(TM) system entry vector (pDONR201).</title>
        <authorList>
            <person name="Halleck A."/>
            <person name="Ebert L."/>
            <person name="Mkoundinya M."/>
            <person name="Schick M."/>
            <person name="Eisenstein S."/>
            <person name="Neubert P."/>
            <person name="Kstrang K."/>
            <person name="Schatten R."/>
            <person name="Shen B."/>
            <person name="Henze S."/>
            <person name="Mar W."/>
            <person name="Korn B."/>
            <person name="Zuo D."/>
            <person name="Hu Y."/>
            <person name="LaBaer J."/>
        </authorList>
    </citation>
    <scope>NUCLEOTIDE SEQUENCE [LARGE SCALE MRNA] (ISOFORM 1)</scope>
    <scope>VARIANTS GLU-63; SER-92; PRO-98 AND THR-123</scope>
</reference>
<reference key="5">
    <citation type="journal article" date="2004" name="Genome Res.">
        <title>The status, quality, and expansion of the NIH full-length cDNA project: the Mammalian Gene Collection (MGC).</title>
        <authorList>
            <consortium name="The MGC Project Team"/>
        </authorList>
    </citation>
    <scope>NUCLEOTIDE SEQUENCE [LARGE SCALE MRNA] (ISOFORM 1)</scope>
    <scope>VARIANTS GLU-63; SER-92; PRO-98 AND THR-123</scope>
    <source>
        <tissue>Pancreas</tissue>
    </source>
</reference>
<reference key="6">
    <citation type="journal article" date="1998" name="Eur. J. Immunol.">
        <title>p40/LAIR-1 regulates the differentiation of peripheral blood precursors to dendritic cells induced by granulocyte-monocyte colony-stimulating factor.</title>
        <authorList>
            <person name="Poggi A."/>
            <person name="Tomasello E."/>
            <person name="Ferrero E."/>
            <person name="Zocchi M.R."/>
            <person name="Moretta L."/>
        </authorList>
    </citation>
    <scope>FUNCTION</scope>
</reference>
<reference key="7">
    <citation type="journal article" date="1999" name="Eur. J. Immunol.">
        <title>Leukocyte-associated immunoglobulin-like receptor-1 (LAIR-1) is differentially expressed during human B cell differentiation and inhibits B cell receptor-mediated signaling.</title>
        <authorList>
            <person name="van der Vuurst de Vries A.-R."/>
            <person name="Clevers H."/>
            <person name="Logtenberg T."/>
            <person name="Meyaard L."/>
        </authorList>
    </citation>
    <scope>TISSUE SPECIFICITY</scope>
    <scope>DEVELOPMENTAL STAGE</scope>
</reference>
<reference key="8">
    <citation type="journal article" date="2000" name="Eur. J. Immunol.">
        <title>Engagement of the leukocyte-associated Ig-like receptor-1 induces programmed cell death and prevents NF-kappaB nuclear translocation in human myeloid leukemias.</title>
        <authorList>
            <person name="Poggi A."/>
            <person name="Pellegatta F."/>
            <person name="Leone B.E."/>
            <person name="Moretta L."/>
            <person name="Zocchi M.R."/>
        </authorList>
    </citation>
    <scope>FUNCTION</scope>
</reference>
<reference key="9">
    <citation type="journal article" date="2001" name="J. Immunol.">
        <title>Constitutive association of SHP-1 with leukocyte-associated Ig-like receptor-1 in human T cells.</title>
        <authorList>
            <person name="Sathish J.G."/>
            <person name="Johnson K.G."/>
            <person name="Fuller K.J."/>
            <person name="LeRoy F.G."/>
            <person name="Meyaard L."/>
            <person name="Sims M.J."/>
            <person name="Matthews R.J."/>
        </authorList>
    </citation>
    <scope>SUBCELLULAR LOCATION</scope>
    <scope>INTERACTION WITH PTPN6</scope>
    <scope>FUNCTION</scope>
</reference>
<reference key="10">
    <citation type="journal article" date="2002" name="Hum. Immunol.">
        <title>Surface density expression of the leukocyte-associated Ig-like receptor-1 is directly related to inhibition of human T-cell functions.</title>
        <authorList>
            <person name="Saverino D."/>
            <person name="Fabbi M."/>
            <person name="Merlo A."/>
            <person name="Ravera G."/>
            <person name="Grossi C.E."/>
            <person name="Ciccone E."/>
        </authorList>
    </citation>
    <scope>FUNCTION</scope>
</reference>
<reference key="11">
    <citation type="journal article" date="2003" name="Int. Immunol.">
        <title>Differential contribution of the immunoreceptor tyrosine-based inhibitory motifs of human leukocyte-associated Ig-like receptor-1 to inhibitory function and phosphatase recruitment.</title>
        <authorList>
            <person name="Verbrugge A."/>
            <person name="de Ruiter T."/>
            <person name="Clevers H."/>
            <person name="Meyaard L."/>
        </authorList>
    </citation>
    <scope>MUTAGENESIS OF TYR-251 AND TYR-281</scope>
</reference>
<reference key="12">
    <citation type="journal article" date="2003" name="J. Clin. Immunol.">
        <title>Chronic active Epstein-Barr virus infection associated with low expression of leukocyte-associated immunoglobulin-like receptor-1 (LAIR-1) on natural killer cells.</title>
        <authorList>
            <person name="Aoukaty A."/>
            <person name="Lee I.-F."/>
            <person name="Wu J."/>
            <person name="Tan R."/>
        </authorList>
    </citation>
    <scope>TISSUE SPECIFICITY</scope>
</reference>
<reference key="13">
    <citation type="journal article" date="2004" name="Blood">
        <title>Mechanisms of hypergammaglobulinemia and impaired antigen-specific humoral immunity in HIV-1 infection.</title>
        <authorList>
            <person name="De Milito A."/>
            <person name="Nilsson A."/>
            <person name="Titanji K."/>
            <person name="Thorstensson R."/>
            <person name="Reizenstein E."/>
            <person name="Narita M."/>
            <person name="Grutzmeier S."/>
            <person name="Sonnerborg A."/>
            <person name="Chiodi F."/>
        </authorList>
    </citation>
    <scope>TISSUE SPECIFICITY</scope>
</reference>
<reference key="14">
    <citation type="journal article" date="2005" name="Clin. Diagn. Lab. Immunol.">
        <title>Inhibitory receptors CD85j, LAIR-1, and CD152 down-regulate immunoglobulin and cytokine production by human B lymphocytes.</title>
        <authorList>
            <person name="Merlo A."/>
            <person name="Tenca C."/>
            <person name="Fais F."/>
            <person name="Battini L."/>
            <person name="Ciccone E."/>
            <person name="Grossi C.E."/>
            <person name="Saverino D."/>
        </authorList>
    </citation>
    <scope>FUNCTION</scope>
</reference>
<reference key="15">
    <citation type="journal article" date="2005" name="Mol. Immunol.">
        <title>The inhibitory leukocyte-associated Ig-like receptor-1 (LAIR-1) is expressed at high levels by human naive T cells and inhibits TCR mediated activation.</title>
        <authorList>
            <person name="Maasho K."/>
            <person name="Masilamani M."/>
            <person name="Valas R."/>
            <person name="Basu S."/>
            <person name="Coligan J.E."/>
            <person name="Borrego F."/>
        </authorList>
    </citation>
    <scope>FUNCTION</scope>
    <scope>INDUCTION</scope>
    <scope>TISSUE SPECIFICITY</scope>
</reference>
<reference key="16">
    <citation type="journal article" date="2006" name="Eur. J. Immunol.">
        <title>Leukocyte-associated Ig-like receptor-1 has SH2 domain-containing phosphatase-independent function and recruits C-terminal Src kinase.</title>
        <authorList>
            <person name="Verbrugge A."/>
            <person name="Rijkers E.S.K."/>
            <person name="de Ruiter T."/>
            <person name="Meyaard L."/>
        </authorList>
    </citation>
    <scope>INTERACTION WITH CSK</scope>
    <scope>MUTAGENESIS OF TYR-251 AND TYR-281</scope>
    <scope>FUNCTION</scope>
</reference>
<reference key="17">
    <citation type="journal article" date="2009" name="Nat. Biotechnol.">
        <title>Mass-spectrometric identification and relative quantification of N-linked cell surface glycoproteins.</title>
        <authorList>
            <person name="Wollscheid B."/>
            <person name="Bausch-Fluck D."/>
            <person name="Henderson C."/>
            <person name="O'Brien R."/>
            <person name="Bibel M."/>
            <person name="Schiess R."/>
            <person name="Aebersold R."/>
            <person name="Watts J.D."/>
        </authorList>
    </citation>
    <scope>GLYCOSYLATION [LARGE SCALE ANALYSIS] AT ASN-69</scope>
    <source>
        <tissue>Leukemic T-cell</tissue>
    </source>
</reference>
<reference key="18">
    <citation type="journal article" date="2009" name="Sci. Signal.">
        <title>Quantitative phosphoproteomic analysis of T cell receptor signaling reveals system-wide modulation of protein-protein interactions.</title>
        <authorList>
            <person name="Mayya V."/>
            <person name="Lundgren D.H."/>
            <person name="Hwang S.-I."/>
            <person name="Rezaul K."/>
            <person name="Wu L."/>
            <person name="Eng J.K."/>
            <person name="Rodionov V."/>
            <person name="Han D.K."/>
        </authorList>
    </citation>
    <scope>IDENTIFICATION BY MASS SPECTROMETRY [LARGE SCALE ANALYSIS]</scope>
    <source>
        <tissue>Leukemic T-cell</tissue>
    </source>
</reference>
<reference key="19">
    <citation type="journal article" date="2015" name="Proteomics">
        <title>N-terminome analysis of the human mitochondrial proteome.</title>
        <authorList>
            <person name="Vaca Jacome A.S."/>
            <person name="Rabilloud T."/>
            <person name="Schaeffer-Reiss C."/>
            <person name="Rompais M."/>
            <person name="Ayoub D."/>
            <person name="Lane L."/>
            <person name="Bairoch A."/>
            <person name="Van Dorsselaer A."/>
            <person name="Carapito C."/>
        </authorList>
    </citation>
    <scope>IDENTIFICATION BY MASS SPECTROMETRY [LARGE SCALE ANALYSIS]</scope>
</reference>
<reference key="20">
    <citation type="journal article" date="2010" name="Blood">
        <title>Crystal structure and collagen-binding site of immune inhibitory receptor LAIR-1: unexpected implications for collagen binding by platelet receptor GPVI.</title>
        <authorList>
            <person name="Brondijk T.H."/>
            <person name="de Ruiter T."/>
            <person name="Ballering J."/>
            <person name="Wienk H."/>
            <person name="Lebbink R.J."/>
            <person name="van Ingen H."/>
            <person name="Boelens R."/>
            <person name="Farndale R.W."/>
            <person name="Meyaard L."/>
            <person name="Huizinga E.G."/>
        </authorList>
    </citation>
    <scope>X-RAY CRYSTALLOGRAPHY (1.8 ANGSTROMS) OF 22-122</scope>
    <scope>INTERACTION WITH COLLAGENS</scope>
    <scope>DISULFIDE BOND</scope>
</reference>
<sequence>MSPHPTALLGLVLCLAQTIHTQEEDLPRPSISAEPGTVIPLGSHVTFVCRGPVGVQTFRLERDSRSTYNDTEDVSQASPSESEARFRIDSVREGNAGLYRCIYYKPPKWSEQSDYLELLVKESSGGPDSPDTEPGSSAGPTQRPSDNSHNEHAPASQGLKAEHLYILIGVSVVFLFCLLLLVLFCLHRQNQIKQGPPRSKDEEQKPQQRPDLAVDVLERTADKATVNGLPEKDRETDTSALAAGSSQEVTYAQLDHWALTQRTARAVSPQSTKPMAESITYAAVARH</sequence>
<gene>
    <name type="primary">LAIR1</name>
    <name type="synonym">CD305</name>
</gene>
<keyword id="KW-0002">3D-structure</keyword>
<keyword id="KW-1064">Adaptive immunity</keyword>
<keyword id="KW-0025">Alternative splicing</keyword>
<keyword id="KW-1003">Cell membrane</keyword>
<keyword id="KW-1015">Disulfide bond</keyword>
<keyword id="KW-0325">Glycoprotein</keyword>
<keyword id="KW-0391">Immunity</keyword>
<keyword id="KW-0393">Immunoglobulin domain</keyword>
<keyword id="KW-0472">Membrane</keyword>
<keyword id="KW-0597">Phosphoprotein</keyword>
<keyword id="KW-1267">Proteomics identification</keyword>
<keyword id="KW-0675">Receptor</keyword>
<keyword id="KW-1185">Reference proteome</keyword>
<keyword id="KW-0732">Signal</keyword>
<keyword id="KW-0812">Transmembrane</keyword>
<keyword id="KW-1133">Transmembrane helix</keyword>